<feature type="chain" id="PRO_0000323468" description="Elongation factor Ts">
    <location>
        <begin position="1"/>
        <end position="346"/>
    </location>
</feature>
<feature type="region of interest" description="Involved in Mg(2+) ion dislocation from EF-Tu" evidence="1">
    <location>
        <begin position="80"/>
        <end position="83"/>
    </location>
</feature>
<gene>
    <name evidence="1" type="primary">tsf</name>
    <name type="ordered locus">MGAS9429_Spy1792</name>
</gene>
<organism>
    <name type="scientific">Streptococcus pyogenes serotype M12 (strain MGAS9429)</name>
    <dbReference type="NCBI Taxonomy" id="370551"/>
    <lineage>
        <taxon>Bacteria</taxon>
        <taxon>Bacillati</taxon>
        <taxon>Bacillota</taxon>
        <taxon>Bacilli</taxon>
        <taxon>Lactobacillales</taxon>
        <taxon>Streptococcaceae</taxon>
        <taxon>Streptococcus</taxon>
    </lineage>
</organism>
<accession>Q1JJJ4</accession>
<comment type="function">
    <text evidence="1">Associates with the EF-Tu.GDP complex and induces the exchange of GDP to GTP. It remains bound to the aminoacyl-tRNA.EF-Tu.GTP complex up to the GTP hydrolysis stage on the ribosome.</text>
</comment>
<comment type="subcellular location">
    <subcellularLocation>
        <location evidence="1">Cytoplasm</location>
    </subcellularLocation>
</comment>
<comment type="similarity">
    <text evidence="1">Belongs to the EF-Ts family.</text>
</comment>
<comment type="sequence caution" evidence="2">
    <conflict type="erroneous initiation">
        <sequence resource="EMBL-CDS" id="ABF32979"/>
    </conflict>
</comment>
<proteinExistence type="inferred from homology"/>
<protein>
    <recommendedName>
        <fullName evidence="1">Elongation factor Ts</fullName>
        <shortName evidence="1">EF-Ts</shortName>
    </recommendedName>
</protein>
<dbReference type="EMBL" id="CP000259">
    <property type="protein sequence ID" value="ABF32979.1"/>
    <property type="status" value="ALT_INIT"/>
    <property type="molecule type" value="Genomic_DNA"/>
</dbReference>
<dbReference type="RefSeq" id="WP_002982258.1">
    <property type="nucleotide sequence ID" value="NC_008021.1"/>
</dbReference>
<dbReference type="SMR" id="Q1JJJ4"/>
<dbReference type="GeneID" id="69901553"/>
<dbReference type="KEGG" id="spk:MGAS9429_Spy1792"/>
<dbReference type="HOGENOM" id="CLU_047155_0_1_9"/>
<dbReference type="Proteomes" id="UP000002433">
    <property type="component" value="Chromosome"/>
</dbReference>
<dbReference type="GO" id="GO:0005737">
    <property type="term" value="C:cytoplasm"/>
    <property type="evidence" value="ECO:0007669"/>
    <property type="project" value="UniProtKB-SubCell"/>
</dbReference>
<dbReference type="GO" id="GO:0003746">
    <property type="term" value="F:translation elongation factor activity"/>
    <property type="evidence" value="ECO:0007669"/>
    <property type="project" value="UniProtKB-UniRule"/>
</dbReference>
<dbReference type="CDD" id="cd14275">
    <property type="entry name" value="UBA_EF-Ts"/>
    <property type="match status" value="1"/>
</dbReference>
<dbReference type="FunFam" id="1.10.286.20:FF:000004">
    <property type="entry name" value="Elongation factor Ts"/>
    <property type="match status" value="1"/>
</dbReference>
<dbReference type="FunFam" id="1.10.8.10:FF:000001">
    <property type="entry name" value="Elongation factor Ts"/>
    <property type="match status" value="1"/>
</dbReference>
<dbReference type="FunFam" id="3.30.479.20:FF:000013">
    <property type="entry name" value="Elongation factor Ts"/>
    <property type="match status" value="1"/>
</dbReference>
<dbReference type="Gene3D" id="1.10.286.20">
    <property type="match status" value="1"/>
</dbReference>
<dbReference type="Gene3D" id="1.10.8.10">
    <property type="entry name" value="DNA helicase RuvA subunit, C-terminal domain"/>
    <property type="match status" value="1"/>
</dbReference>
<dbReference type="Gene3D" id="3.30.479.20">
    <property type="entry name" value="Elongation factor Ts, dimerisation domain"/>
    <property type="match status" value="2"/>
</dbReference>
<dbReference type="HAMAP" id="MF_00050">
    <property type="entry name" value="EF_Ts"/>
    <property type="match status" value="1"/>
</dbReference>
<dbReference type="InterPro" id="IPR036402">
    <property type="entry name" value="EF-Ts_dimer_sf"/>
</dbReference>
<dbReference type="InterPro" id="IPR001816">
    <property type="entry name" value="Transl_elong_EFTs/EF1B"/>
</dbReference>
<dbReference type="InterPro" id="IPR014039">
    <property type="entry name" value="Transl_elong_EFTs/EF1B_dimer"/>
</dbReference>
<dbReference type="InterPro" id="IPR018101">
    <property type="entry name" value="Transl_elong_Ts_CS"/>
</dbReference>
<dbReference type="InterPro" id="IPR009060">
    <property type="entry name" value="UBA-like_sf"/>
</dbReference>
<dbReference type="NCBIfam" id="TIGR00116">
    <property type="entry name" value="tsf"/>
    <property type="match status" value="1"/>
</dbReference>
<dbReference type="PANTHER" id="PTHR11741">
    <property type="entry name" value="ELONGATION FACTOR TS"/>
    <property type="match status" value="1"/>
</dbReference>
<dbReference type="PANTHER" id="PTHR11741:SF0">
    <property type="entry name" value="ELONGATION FACTOR TS, MITOCHONDRIAL"/>
    <property type="match status" value="1"/>
</dbReference>
<dbReference type="Pfam" id="PF00889">
    <property type="entry name" value="EF_TS"/>
    <property type="match status" value="1"/>
</dbReference>
<dbReference type="SUPFAM" id="SSF54713">
    <property type="entry name" value="Elongation factor Ts (EF-Ts), dimerisation domain"/>
    <property type="match status" value="1"/>
</dbReference>
<dbReference type="SUPFAM" id="SSF46934">
    <property type="entry name" value="UBA-like"/>
    <property type="match status" value="1"/>
</dbReference>
<dbReference type="PROSITE" id="PS01126">
    <property type="entry name" value="EF_TS_1"/>
    <property type="match status" value="1"/>
</dbReference>
<dbReference type="PROSITE" id="PS01127">
    <property type="entry name" value="EF_TS_2"/>
    <property type="match status" value="1"/>
</dbReference>
<reference key="1">
    <citation type="journal article" date="2006" name="Proc. Natl. Acad. Sci. U.S.A.">
        <title>Molecular genetic anatomy of inter- and intraserotype variation in the human bacterial pathogen group A Streptococcus.</title>
        <authorList>
            <person name="Beres S.B."/>
            <person name="Richter E.W."/>
            <person name="Nagiec M.J."/>
            <person name="Sumby P."/>
            <person name="Porcella S.F."/>
            <person name="DeLeo F.R."/>
            <person name="Musser J.M."/>
        </authorList>
    </citation>
    <scope>NUCLEOTIDE SEQUENCE [LARGE SCALE GENOMIC DNA]</scope>
    <source>
        <strain>MGAS9429</strain>
    </source>
</reference>
<sequence length="346" mass="37257">MAEITAKLVKELREKSGAGVMDAKKALVETDGDMDKAVELLREKGMAKAAKKADRVAAEGLTGVYVHGNVAAVVEVNAETDFVAKNAQFVELVNATAKVIAEGKPANNDEALALVMPSGETLAEAYVNATATIGEKISFRRFALIEKTDEQHFGAYQHNGGRIGVISVVEGGDDALAKQVSMHIAAMKPTVLSYTELDAQFIKDELAQLNHAIELDNESRAMVDKPALPFLKYGSKAQLSDDVITAAEADIKAELAAEGKPEKIWDKIIPGKMDRFMLDNTKVDQAYTLLAQVYIMDDSKTVEAYLDSVNAKAIAFARFEVGEGIEKKANDFESEVAATMAAALNN</sequence>
<name>EFTS_STRPC</name>
<keyword id="KW-0963">Cytoplasm</keyword>
<keyword id="KW-0251">Elongation factor</keyword>
<keyword id="KW-0648">Protein biosynthesis</keyword>
<evidence type="ECO:0000255" key="1">
    <source>
        <dbReference type="HAMAP-Rule" id="MF_00050"/>
    </source>
</evidence>
<evidence type="ECO:0000305" key="2"/>